<reference key="1">
    <citation type="journal article" date="2009" name="J. Bacteriol.">
        <title>Genome sequences of three Agrobacterium biovars help elucidate the evolution of multichromosome genomes in bacteria.</title>
        <authorList>
            <person name="Slater S.C."/>
            <person name="Goldman B.S."/>
            <person name="Goodner B."/>
            <person name="Setubal J.C."/>
            <person name="Farrand S.K."/>
            <person name="Nester E.W."/>
            <person name="Burr T.J."/>
            <person name="Banta L."/>
            <person name="Dickerman A.W."/>
            <person name="Paulsen I."/>
            <person name="Otten L."/>
            <person name="Suen G."/>
            <person name="Welch R."/>
            <person name="Almeida N.F."/>
            <person name="Arnold F."/>
            <person name="Burton O.T."/>
            <person name="Du Z."/>
            <person name="Ewing A."/>
            <person name="Godsy E."/>
            <person name="Heisel S."/>
            <person name="Houmiel K.L."/>
            <person name="Jhaveri J."/>
            <person name="Lu J."/>
            <person name="Miller N.M."/>
            <person name="Norton S."/>
            <person name="Chen Q."/>
            <person name="Phoolcharoen W."/>
            <person name="Ohlin V."/>
            <person name="Ondrusek D."/>
            <person name="Pride N."/>
            <person name="Stricklin S.L."/>
            <person name="Sun J."/>
            <person name="Wheeler C."/>
            <person name="Wilson L."/>
            <person name="Zhu H."/>
            <person name="Wood D.W."/>
        </authorList>
    </citation>
    <scope>NUCLEOTIDE SEQUENCE [LARGE SCALE GENOMIC DNA]</scope>
    <source>
        <strain>K84 / ATCC BAA-868</strain>
    </source>
</reference>
<organism>
    <name type="scientific">Rhizobium rhizogenes (strain K84 / ATCC BAA-868)</name>
    <name type="common">Agrobacterium radiobacter</name>
    <dbReference type="NCBI Taxonomy" id="311403"/>
    <lineage>
        <taxon>Bacteria</taxon>
        <taxon>Pseudomonadati</taxon>
        <taxon>Pseudomonadota</taxon>
        <taxon>Alphaproteobacteria</taxon>
        <taxon>Hyphomicrobiales</taxon>
        <taxon>Rhizobiaceae</taxon>
        <taxon>Rhizobium/Agrobacterium group</taxon>
        <taxon>Rhizobium</taxon>
    </lineage>
</organism>
<name>CYSN_RHIR8</name>
<comment type="function">
    <text evidence="2">With CysD forms the ATP sulfurylase (ATPS) that catalyzes the adenylation of sulfate producing adenosine 5'-phosphosulfate (APS) and diphosphate, the first enzymatic step in sulfur assimilation pathway. APS synthesis involves the formation of a high-energy phosphoric-sulfuric acid anhydride bond driven by GTP hydrolysis by CysN coupled to ATP hydrolysis by CysD.</text>
</comment>
<comment type="catalytic activity">
    <reaction evidence="2">
        <text>sulfate + ATP + H(+) = adenosine 5'-phosphosulfate + diphosphate</text>
        <dbReference type="Rhea" id="RHEA:18133"/>
        <dbReference type="ChEBI" id="CHEBI:15378"/>
        <dbReference type="ChEBI" id="CHEBI:16189"/>
        <dbReference type="ChEBI" id="CHEBI:30616"/>
        <dbReference type="ChEBI" id="CHEBI:33019"/>
        <dbReference type="ChEBI" id="CHEBI:58243"/>
        <dbReference type="EC" id="2.7.7.4"/>
    </reaction>
</comment>
<comment type="pathway">
    <text evidence="2">Sulfur metabolism; hydrogen sulfide biosynthesis; sulfite from sulfate: step 1/3.</text>
</comment>
<comment type="subunit">
    <text evidence="2">Heterodimer composed of CysD, the smaller subunit, and CysN.</text>
</comment>
<comment type="similarity">
    <text evidence="2">Belongs to the TRAFAC class translation factor GTPase superfamily. Classic translation factor GTPase family. CysN/NodQ subfamily.</text>
</comment>
<keyword id="KW-0067">ATP-binding</keyword>
<keyword id="KW-0342">GTP-binding</keyword>
<keyword id="KW-0547">Nucleotide-binding</keyword>
<keyword id="KW-0548">Nucleotidyltransferase</keyword>
<keyword id="KW-0808">Transferase</keyword>
<proteinExistence type="inferred from homology"/>
<feature type="chain" id="PRO_1000117909" description="Sulfate adenylyltransferase subunit 1">
    <location>
        <begin position="1"/>
        <end position="494"/>
    </location>
</feature>
<feature type="domain" description="tr-type G">
    <location>
        <begin position="24"/>
        <end position="240"/>
    </location>
</feature>
<feature type="region of interest" description="G1" evidence="1">
    <location>
        <begin position="33"/>
        <end position="40"/>
    </location>
</feature>
<feature type="region of interest" description="G2" evidence="1">
    <location>
        <begin position="91"/>
        <end position="95"/>
    </location>
</feature>
<feature type="region of interest" description="G3" evidence="1">
    <location>
        <begin position="112"/>
        <end position="115"/>
    </location>
</feature>
<feature type="region of interest" description="G4" evidence="1">
    <location>
        <begin position="167"/>
        <end position="170"/>
    </location>
</feature>
<feature type="region of interest" description="G5" evidence="1">
    <location>
        <begin position="204"/>
        <end position="206"/>
    </location>
</feature>
<feature type="binding site" evidence="2">
    <location>
        <begin position="33"/>
        <end position="40"/>
    </location>
    <ligand>
        <name>GTP</name>
        <dbReference type="ChEBI" id="CHEBI:37565"/>
    </ligand>
</feature>
<feature type="binding site" evidence="2">
    <location>
        <begin position="112"/>
        <end position="116"/>
    </location>
    <ligand>
        <name>GTP</name>
        <dbReference type="ChEBI" id="CHEBI:37565"/>
    </ligand>
</feature>
<feature type="binding site" evidence="2">
    <location>
        <begin position="167"/>
        <end position="170"/>
    </location>
    <ligand>
        <name>GTP</name>
        <dbReference type="ChEBI" id="CHEBI:37565"/>
    </ligand>
</feature>
<dbReference type="EC" id="2.7.7.4" evidence="2"/>
<dbReference type="EMBL" id="CP000628">
    <property type="protein sequence ID" value="ACM25801.1"/>
    <property type="molecule type" value="Genomic_DNA"/>
</dbReference>
<dbReference type="RefSeq" id="WP_012651086.1">
    <property type="nucleotide sequence ID" value="NC_011985.1"/>
</dbReference>
<dbReference type="SMR" id="B9JB95"/>
<dbReference type="STRING" id="311403.Arad_1342"/>
<dbReference type="KEGG" id="ara:Arad_1342"/>
<dbReference type="eggNOG" id="COG2895">
    <property type="taxonomic scope" value="Bacteria"/>
</dbReference>
<dbReference type="HOGENOM" id="CLU_007265_5_2_5"/>
<dbReference type="UniPathway" id="UPA00140">
    <property type="reaction ID" value="UER00204"/>
</dbReference>
<dbReference type="Proteomes" id="UP000001600">
    <property type="component" value="Chromosome 1"/>
</dbReference>
<dbReference type="GO" id="GO:0005524">
    <property type="term" value="F:ATP binding"/>
    <property type="evidence" value="ECO:0007669"/>
    <property type="project" value="UniProtKB-KW"/>
</dbReference>
<dbReference type="GO" id="GO:0005525">
    <property type="term" value="F:GTP binding"/>
    <property type="evidence" value="ECO:0007669"/>
    <property type="project" value="UniProtKB-UniRule"/>
</dbReference>
<dbReference type="GO" id="GO:0003924">
    <property type="term" value="F:GTPase activity"/>
    <property type="evidence" value="ECO:0007669"/>
    <property type="project" value="InterPro"/>
</dbReference>
<dbReference type="GO" id="GO:0004781">
    <property type="term" value="F:sulfate adenylyltransferase (ATP) activity"/>
    <property type="evidence" value="ECO:0007669"/>
    <property type="project" value="UniProtKB-UniRule"/>
</dbReference>
<dbReference type="GO" id="GO:0070814">
    <property type="term" value="P:hydrogen sulfide biosynthetic process"/>
    <property type="evidence" value="ECO:0007669"/>
    <property type="project" value="UniProtKB-UniRule"/>
</dbReference>
<dbReference type="GO" id="GO:0000103">
    <property type="term" value="P:sulfate assimilation"/>
    <property type="evidence" value="ECO:0007669"/>
    <property type="project" value="UniProtKB-UniRule"/>
</dbReference>
<dbReference type="CDD" id="cd04166">
    <property type="entry name" value="CysN_ATPS"/>
    <property type="match status" value="1"/>
</dbReference>
<dbReference type="CDD" id="cd03695">
    <property type="entry name" value="CysN_NodQ_II"/>
    <property type="match status" value="1"/>
</dbReference>
<dbReference type="CDD" id="cd04095">
    <property type="entry name" value="CysN_NoDQ_III"/>
    <property type="match status" value="1"/>
</dbReference>
<dbReference type="FunFam" id="3.40.50.300:FF:000119">
    <property type="entry name" value="Sulfate adenylyltransferase subunit 1"/>
    <property type="match status" value="1"/>
</dbReference>
<dbReference type="Gene3D" id="3.40.50.300">
    <property type="entry name" value="P-loop containing nucleotide triphosphate hydrolases"/>
    <property type="match status" value="1"/>
</dbReference>
<dbReference type="Gene3D" id="2.40.30.10">
    <property type="entry name" value="Translation factors"/>
    <property type="match status" value="2"/>
</dbReference>
<dbReference type="HAMAP" id="MF_00062">
    <property type="entry name" value="Sulf_adenylyltr_sub1"/>
    <property type="match status" value="1"/>
</dbReference>
<dbReference type="InterPro" id="IPR041757">
    <property type="entry name" value="CysN_GTP-bd"/>
</dbReference>
<dbReference type="InterPro" id="IPR044138">
    <property type="entry name" value="CysN_II"/>
</dbReference>
<dbReference type="InterPro" id="IPR044139">
    <property type="entry name" value="CysN_NoDQ_III"/>
</dbReference>
<dbReference type="InterPro" id="IPR031157">
    <property type="entry name" value="G_TR_CS"/>
</dbReference>
<dbReference type="InterPro" id="IPR054696">
    <property type="entry name" value="GTP-eEF1A_C"/>
</dbReference>
<dbReference type="InterPro" id="IPR027417">
    <property type="entry name" value="P-loop_NTPase"/>
</dbReference>
<dbReference type="InterPro" id="IPR011779">
    <property type="entry name" value="SO4_adenylTrfase_lsu"/>
</dbReference>
<dbReference type="InterPro" id="IPR000795">
    <property type="entry name" value="T_Tr_GTP-bd_dom"/>
</dbReference>
<dbReference type="InterPro" id="IPR050100">
    <property type="entry name" value="TRAFAC_GTPase_members"/>
</dbReference>
<dbReference type="InterPro" id="IPR009000">
    <property type="entry name" value="Transl_B-barrel_sf"/>
</dbReference>
<dbReference type="InterPro" id="IPR009001">
    <property type="entry name" value="Transl_elong_EF1A/Init_IF2_C"/>
</dbReference>
<dbReference type="NCBIfam" id="TIGR02034">
    <property type="entry name" value="CysN"/>
    <property type="match status" value="1"/>
</dbReference>
<dbReference type="NCBIfam" id="NF003478">
    <property type="entry name" value="PRK05124.1"/>
    <property type="match status" value="1"/>
</dbReference>
<dbReference type="PANTHER" id="PTHR23115">
    <property type="entry name" value="TRANSLATION FACTOR"/>
    <property type="match status" value="1"/>
</dbReference>
<dbReference type="Pfam" id="PF22594">
    <property type="entry name" value="GTP-eEF1A_C"/>
    <property type="match status" value="1"/>
</dbReference>
<dbReference type="Pfam" id="PF00009">
    <property type="entry name" value="GTP_EFTU"/>
    <property type="match status" value="1"/>
</dbReference>
<dbReference type="PRINTS" id="PR00315">
    <property type="entry name" value="ELONGATNFCT"/>
</dbReference>
<dbReference type="SUPFAM" id="SSF50465">
    <property type="entry name" value="EF-Tu/eEF-1alpha/eIF2-gamma C-terminal domain"/>
    <property type="match status" value="1"/>
</dbReference>
<dbReference type="SUPFAM" id="SSF52540">
    <property type="entry name" value="P-loop containing nucleoside triphosphate hydrolases"/>
    <property type="match status" value="1"/>
</dbReference>
<dbReference type="SUPFAM" id="SSF50447">
    <property type="entry name" value="Translation proteins"/>
    <property type="match status" value="1"/>
</dbReference>
<dbReference type="PROSITE" id="PS00301">
    <property type="entry name" value="G_TR_1"/>
    <property type="match status" value="1"/>
</dbReference>
<dbReference type="PROSITE" id="PS51722">
    <property type="entry name" value="G_TR_2"/>
    <property type="match status" value="1"/>
</dbReference>
<gene>
    <name evidence="2" type="primary">cysN</name>
    <name type="ordered locus">Arad_1342</name>
</gene>
<protein>
    <recommendedName>
        <fullName evidence="2">Sulfate adenylyltransferase subunit 1</fullName>
        <ecNumber evidence="2">2.7.7.4</ecNumber>
    </recommendedName>
    <alternativeName>
        <fullName evidence="2">ATP-sulfurylase large subunit</fullName>
    </alternativeName>
    <alternativeName>
        <fullName evidence="2">Sulfate adenylate transferase</fullName>
        <shortName evidence="2">SAT</shortName>
    </alternativeName>
</protein>
<evidence type="ECO:0000250" key="1"/>
<evidence type="ECO:0000255" key="2">
    <source>
        <dbReference type="HAMAP-Rule" id="MF_00062"/>
    </source>
</evidence>
<sequence length="494" mass="53311">MTAAVTANVVTLPAAEPAKAVRDTRPLRLITCGSVDDGKSTLIGRLLWDTKAVKEDQAATLQRDSTGKQNDLGLPDFALLLDGLQAEREQGITIDVAYRYFSTDNRSFIVADTPGHEQYTRNMATGASTADLAILLIDARLGILEQTRRHATIASLLGIKQFVLAVNKIDLTNYDRAGFEKIAHDFREFALSLGVKQITAIPMSALKGENVVYSGQAAMPWYNGPTLVETLELATVRSAQSVGFRLSVQRVSRPGESFRGYQGTVAGGSVKPGDSVMILPSGMVANVSKIVTFDLVRNAAVAGDAITLVLDRQVDVSRGDMIVAIDSQPQSGLAFDAQIVALQPEGIEPGKRYWLKSGSRRQRVQVQPIAQLELKTGAWAPAQALWMNAIGKVRLSFDEAAVFDPYDQNRSTGSFILIDPDSNNTIAGGMITGKRTDLGGIHKEGQRVLLSLPADLADQIMASELFASRRDETEVRRVTAAQAADIWANAASDI</sequence>
<accession>B9JB95</accession>